<feature type="chain" id="PRO_1000023000" description="Shikimate kinase">
    <location>
        <begin position="1"/>
        <end position="171"/>
    </location>
</feature>
<feature type="binding site" evidence="1">
    <location>
        <begin position="14"/>
        <end position="19"/>
    </location>
    <ligand>
        <name>ATP</name>
        <dbReference type="ChEBI" id="CHEBI:30616"/>
    </ligand>
</feature>
<feature type="binding site" evidence="1">
    <location>
        <position position="18"/>
    </location>
    <ligand>
        <name>Mg(2+)</name>
        <dbReference type="ChEBI" id="CHEBI:18420"/>
    </ligand>
</feature>
<feature type="binding site" evidence="1">
    <location>
        <position position="36"/>
    </location>
    <ligand>
        <name>substrate</name>
    </ligand>
</feature>
<feature type="binding site" evidence="1">
    <location>
        <position position="60"/>
    </location>
    <ligand>
        <name>substrate</name>
    </ligand>
</feature>
<feature type="binding site" evidence="1">
    <location>
        <position position="82"/>
    </location>
    <ligand>
        <name>substrate</name>
    </ligand>
</feature>
<feature type="binding site" evidence="1">
    <location>
        <position position="120"/>
    </location>
    <ligand>
        <name>ATP</name>
        <dbReference type="ChEBI" id="CHEBI:30616"/>
    </ligand>
</feature>
<feature type="binding site" evidence="1">
    <location>
        <position position="139"/>
    </location>
    <ligand>
        <name>substrate</name>
    </ligand>
</feature>
<feature type="binding site" evidence="1">
    <location>
        <position position="156"/>
    </location>
    <ligand>
        <name>ATP</name>
        <dbReference type="ChEBI" id="CHEBI:30616"/>
    </ligand>
</feature>
<evidence type="ECO:0000255" key="1">
    <source>
        <dbReference type="HAMAP-Rule" id="MF_00109"/>
    </source>
</evidence>
<accession>Q0HDV6</accession>
<gene>
    <name evidence="1" type="primary">aroK</name>
    <name type="ordered locus">Shewmr4_3698</name>
</gene>
<name>AROK_SHESM</name>
<dbReference type="EC" id="2.7.1.71" evidence="1"/>
<dbReference type="EMBL" id="CP000446">
    <property type="protein sequence ID" value="ABI40761.1"/>
    <property type="molecule type" value="Genomic_DNA"/>
</dbReference>
<dbReference type="RefSeq" id="WP_011624420.1">
    <property type="nucleotide sequence ID" value="NC_008321.1"/>
</dbReference>
<dbReference type="SMR" id="Q0HDV6"/>
<dbReference type="KEGG" id="she:Shewmr4_3698"/>
<dbReference type="HOGENOM" id="CLU_057607_2_2_6"/>
<dbReference type="UniPathway" id="UPA00053">
    <property type="reaction ID" value="UER00088"/>
</dbReference>
<dbReference type="GO" id="GO:0005829">
    <property type="term" value="C:cytosol"/>
    <property type="evidence" value="ECO:0007669"/>
    <property type="project" value="TreeGrafter"/>
</dbReference>
<dbReference type="GO" id="GO:0005524">
    <property type="term" value="F:ATP binding"/>
    <property type="evidence" value="ECO:0007669"/>
    <property type="project" value="UniProtKB-UniRule"/>
</dbReference>
<dbReference type="GO" id="GO:0000287">
    <property type="term" value="F:magnesium ion binding"/>
    <property type="evidence" value="ECO:0007669"/>
    <property type="project" value="UniProtKB-UniRule"/>
</dbReference>
<dbReference type="GO" id="GO:0004765">
    <property type="term" value="F:shikimate kinase activity"/>
    <property type="evidence" value="ECO:0007669"/>
    <property type="project" value="UniProtKB-UniRule"/>
</dbReference>
<dbReference type="GO" id="GO:0008652">
    <property type="term" value="P:amino acid biosynthetic process"/>
    <property type="evidence" value="ECO:0007669"/>
    <property type="project" value="UniProtKB-KW"/>
</dbReference>
<dbReference type="GO" id="GO:0009073">
    <property type="term" value="P:aromatic amino acid family biosynthetic process"/>
    <property type="evidence" value="ECO:0007669"/>
    <property type="project" value="UniProtKB-KW"/>
</dbReference>
<dbReference type="GO" id="GO:0009423">
    <property type="term" value="P:chorismate biosynthetic process"/>
    <property type="evidence" value="ECO:0007669"/>
    <property type="project" value="UniProtKB-UniRule"/>
</dbReference>
<dbReference type="CDD" id="cd00464">
    <property type="entry name" value="SK"/>
    <property type="match status" value="1"/>
</dbReference>
<dbReference type="FunFam" id="3.40.50.300:FF:000099">
    <property type="entry name" value="Shikimate kinase 1"/>
    <property type="match status" value="1"/>
</dbReference>
<dbReference type="Gene3D" id="3.40.50.300">
    <property type="entry name" value="P-loop containing nucleotide triphosphate hydrolases"/>
    <property type="match status" value="1"/>
</dbReference>
<dbReference type="HAMAP" id="MF_00109">
    <property type="entry name" value="Shikimate_kinase"/>
    <property type="match status" value="1"/>
</dbReference>
<dbReference type="InterPro" id="IPR027417">
    <property type="entry name" value="P-loop_NTPase"/>
</dbReference>
<dbReference type="InterPro" id="IPR031322">
    <property type="entry name" value="Shikimate/glucono_kinase"/>
</dbReference>
<dbReference type="InterPro" id="IPR000623">
    <property type="entry name" value="Shikimate_kinase/TSH1"/>
</dbReference>
<dbReference type="InterPro" id="IPR023000">
    <property type="entry name" value="Shikimate_kinase_CS"/>
</dbReference>
<dbReference type="NCBIfam" id="NF003456">
    <property type="entry name" value="PRK05057.1"/>
    <property type="match status" value="1"/>
</dbReference>
<dbReference type="PANTHER" id="PTHR21087">
    <property type="entry name" value="SHIKIMATE KINASE"/>
    <property type="match status" value="1"/>
</dbReference>
<dbReference type="PANTHER" id="PTHR21087:SF16">
    <property type="entry name" value="SHIKIMATE KINASE 1, CHLOROPLASTIC"/>
    <property type="match status" value="1"/>
</dbReference>
<dbReference type="Pfam" id="PF01202">
    <property type="entry name" value="SKI"/>
    <property type="match status" value="1"/>
</dbReference>
<dbReference type="PRINTS" id="PR01100">
    <property type="entry name" value="SHIKIMTKNASE"/>
</dbReference>
<dbReference type="SUPFAM" id="SSF52540">
    <property type="entry name" value="P-loop containing nucleoside triphosphate hydrolases"/>
    <property type="match status" value="1"/>
</dbReference>
<dbReference type="PROSITE" id="PS01128">
    <property type="entry name" value="SHIKIMATE_KINASE"/>
    <property type="match status" value="1"/>
</dbReference>
<keyword id="KW-0028">Amino-acid biosynthesis</keyword>
<keyword id="KW-0057">Aromatic amino acid biosynthesis</keyword>
<keyword id="KW-0067">ATP-binding</keyword>
<keyword id="KW-0963">Cytoplasm</keyword>
<keyword id="KW-0418">Kinase</keyword>
<keyword id="KW-0460">Magnesium</keyword>
<keyword id="KW-0479">Metal-binding</keyword>
<keyword id="KW-0547">Nucleotide-binding</keyword>
<keyword id="KW-0808">Transferase</keyword>
<proteinExistence type="inferred from homology"/>
<organism>
    <name type="scientific">Shewanella sp. (strain MR-4)</name>
    <dbReference type="NCBI Taxonomy" id="60480"/>
    <lineage>
        <taxon>Bacteria</taxon>
        <taxon>Pseudomonadati</taxon>
        <taxon>Pseudomonadota</taxon>
        <taxon>Gammaproteobacteria</taxon>
        <taxon>Alteromonadales</taxon>
        <taxon>Shewanellaceae</taxon>
        <taxon>Shewanella</taxon>
    </lineage>
</organism>
<reference key="1">
    <citation type="submission" date="2006-08" db="EMBL/GenBank/DDBJ databases">
        <title>Complete sequence of Shewanella sp. MR-4.</title>
        <authorList>
            <consortium name="US DOE Joint Genome Institute"/>
            <person name="Copeland A."/>
            <person name="Lucas S."/>
            <person name="Lapidus A."/>
            <person name="Barry K."/>
            <person name="Detter J.C."/>
            <person name="Glavina del Rio T."/>
            <person name="Hammon N."/>
            <person name="Israni S."/>
            <person name="Dalin E."/>
            <person name="Tice H."/>
            <person name="Pitluck S."/>
            <person name="Kiss H."/>
            <person name="Brettin T."/>
            <person name="Bruce D."/>
            <person name="Han C."/>
            <person name="Tapia R."/>
            <person name="Gilna P."/>
            <person name="Schmutz J."/>
            <person name="Larimer F."/>
            <person name="Land M."/>
            <person name="Hauser L."/>
            <person name="Kyrpides N."/>
            <person name="Mikhailova N."/>
            <person name="Nealson K."/>
            <person name="Konstantinidis K."/>
            <person name="Klappenbach J."/>
            <person name="Tiedje J."/>
            <person name="Richardson P."/>
        </authorList>
    </citation>
    <scope>NUCLEOTIDE SEQUENCE [LARGE SCALE GENOMIC DNA]</scope>
    <source>
        <strain>MR-4</strain>
    </source>
</reference>
<comment type="function">
    <text evidence="1">Catalyzes the specific phosphorylation of the 3-hydroxyl group of shikimic acid using ATP as a cosubstrate.</text>
</comment>
<comment type="catalytic activity">
    <reaction evidence="1">
        <text>shikimate + ATP = 3-phosphoshikimate + ADP + H(+)</text>
        <dbReference type="Rhea" id="RHEA:13121"/>
        <dbReference type="ChEBI" id="CHEBI:15378"/>
        <dbReference type="ChEBI" id="CHEBI:30616"/>
        <dbReference type="ChEBI" id="CHEBI:36208"/>
        <dbReference type="ChEBI" id="CHEBI:145989"/>
        <dbReference type="ChEBI" id="CHEBI:456216"/>
        <dbReference type="EC" id="2.7.1.71"/>
    </reaction>
</comment>
<comment type="cofactor">
    <cofactor evidence="1">
        <name>Mg(2+)</name>
        <dbReference type="ChEBI" id="CHEBI:18420"/>
    </cofactor>
    <text evidence="1">Binds 1 Mg(2+) ion per subunit.</text>
</comment>
<comment type="pathway">
    <text evidence="1">Metabolic intermediate biosynthesis; chorismate biosynthesis; chorismate from D-erythrose 4-phosphate and phosphoenolpyruvate: step 5/7.</text>
</comment>
<comment type="subunit">
    <text evidence="1">Monomer.</text>
</comment>
<comment type="subcellular location">
    <subcellularLocation>
        <location evidence="1">Cytoplasm</location>
    </subcellularLocation>
</comment>
<comment type="similarity">
    <text evidence="1">Belongs to the shikimate kinase family.</text>
</comment>
<protein>
    <recommendedName>
        <fullName evidence="1">Shikimate kinase</fullName>
        <shortName evidence="1">SK</shortName>
        <ecNumber evidence="1">2.7.1.71</ecNumber>
    </recommendedName>
</protein>
<sequence length="171" mass="19189">MAEKRNIFLVGPMGAGKSTIGRHLAQMLHLEFHDSDQEIEQRTGADIAWVFDVEGEEGFRRREAQVIADLSEKQGIVLATGGGSVQSKDIRNHLSARGIVVYLETTIDKQVARTQRDKRRPLLQVDDPREVLENLAEIRNPLYEEIADVIVKTDDQSAKVVANQIIEKLGF</sequence>